<organism>
    <name type="scientific">Cochliobolus lunatus</name>
    <name type="common">Filamentous fungus</name>
    <name type="synonym">Curvularia lunata</name>
    <dbReference type="NCBI Taxonomy" id="5503"/>
    <lineage>
        <taxon>Eukaryota</taxon>
        <taxon>Fungi</taxon>
        <taxon>Dikarya</taxon>
        <taxon>Ascomycota</taxon>
        <taxon>Pezizomycotina</taxon>
        <taxon>Dothideomycetes</taxon>
        <taxon>Pleosporomycetidae</taxon>
        <taxon>Pleosporales</taxon>
        <taxon>Pleosporineae</taxon>
        <taxon>Pleosporaceae</taxon>
        <taxon>Curvularia</taxon>
    </lineage>
</organism>
<feature type="chain" id="PRO_0000452625" description="Squalestatin tetraketide synthase clz2">
    <location>
        <begin position="1"/>
        <end position="2528"/>
    </location>
</feature>
<feature type="domain" description="Ketosynthase family 3 (KS3)" evidence="4">
    <location>
        <begin position="14"/>
        <end position="409"/>
    </location>
</feature>
<feature type="domain" description="PKS/mFAS DH" evidence="5">
    <location>
        <begin position="925"/>
        <end position="1239"/>
    </location>
</feature>
<feature type="domain" description="Carrier" evidence="3">
    <location>
        <begin position="2441"/>
        <end position="2518"/>
    </location>
</feature>
<feature type="region of interest" description="Disordered" evidence="6">
    <location>
        <begin position="420"/>
        <end position="457"/>
    </location>
</feature>
<feature type="region of interest" description="Malonyl-CoA:ACP transacylase (MAT) domain" evidence="2">
    <location>
        <begin position="538"/>
        <end position="856"/>
    </location>
</feature>
<feature type="region of interest" description="Dehydratase (DH) domain" evidence="2">
    <location>
        <begin position="925"/>
        <end position="1239"/>
    </location>
</feature>
<feature type="region of interest" description="N-terminal hotdog fold" evidence="5">
    <location>
        <begin position="925"/>
        <end position="1063"/>
    </location>
</feature>
<feature type="region of interest" description="C-terminal hotdog fold" evidence="5">
    <location>
        <begin position="1083"/>
        <end position="1239"/>
    </location>
</feature>
<feature type="region of interest" description="Methyltransferase (CMet) domain" evidence="2">
    <location>
        <begin position="1390"/>
        <end position="1590"/>
    </location>
</feature>
<feature type="region of interest" description="Enoyl reductase (ER) (ER) domain" evidence="2">
    <location>
        <begin position="1817"/>
        <end position="2130"/>
    </location>
</feature>
<feature type="region of interest" description="Ketoreductase (KR) domain" evidence="2">
    <location>
        <begin position="2153"/>
        <end position="2331"/>
    </location>
</feature>
<feature type="region of interest" description="Disordered" evidence="6">
    <location>
        <begin position="2408"/>
        <end position="2430"/>
    </location>
</feature>
<feature type="compositionally biased region" description="Low complexity" evidence="6">
    <location>
        <begin position="436"/>
        <end position="452"/>
    </location>
</feature>
<feature type="active site" description="For beta-ketoacyl synthase activity" evidence="4">
    <location>
        <position position="187"/>
    </location>
</feature>
<feature type="active site" description="For beta-ketoacyl synthase activity" evidence="4">
    <location>
        <position position="291"/>
    </location>
</feature>
<feature type="active site" description="For beta-ketoacyl synthase activity" evidence="4">
    <location>
        <position position="331"/>
    </location>
</feature>
<feature type="active site" description="Proton acceptor; for dehydratase activity" evidence="5">
    <location>
        <position position="957"/>
    </location>
</feature>
<feature type="active site" description="Proton donor; for dehydratase activity" evidence="5">
    <location>
        <position position="1148"/>
    </location>
</feature>
<feature type="modified residue" description="O-(pantetheine 4'-phosphoryl)serine" evidence="3">
    <location>
        <position position="2478"/>
    </location>
</feature>
<reference key="1">
    <citation type="journal article" date="2017" name="Org. Lett.">
        <title>Identification and heterologous production of a benzoyl-primed tricarboxylic acid polyketide intermediate from the zaragozic acid A biosynthetic pathway.</title>
        <authorList>
            <person name="Liu N."/>
            <person name="Hung Y.S."/>
            <person name="Gao S.S."/>
            <person name="Hang L."/>
            <person name="Zou Y."/>
            <person name="Chooi Y.H."/>
            <person name="Tang Y."/>
        </authorList>
    </citation>
    <scope>NUCLEOTIDE SEQUENCE [GENOMIC DNA]</scope>
    <scope>FUNCTION</scope>
    <scope>PATHWAY</scope>
    <source>
        <strain>ATCC 74067</strain>
    </source>
</reference>
<protein>
    <recommendedName>
        <fullName evidence="8">Squalestatin tetraketide synthase clz2</fullName>
        <shortName evidence="8">SQTKS</shortName>
        <ecNumber>2.3.1.-</ecNumber>
    </recommendedName>
    <alternativeName>
        <fullName evidence="8">Highly reducing polyketide synthase clz2</fullName>
        <shortName evidence="8">HR-PKS clz2</shortName>
    </alternativeName>
    <alternativeName>
        <fullName evidence="8">Squalestatin S1 biosynthesis cluster protein clz2</fullName>
    </alternativeName>
    <alternativeName>
        <fullName evidence="8">Zaragozic acid A biosynthesis cluster protein 2</fullName>
    </alternativeName>
    <alternativeName>
        <fullName evidence="8">Zaragozic acid A tetraketide synthase clz2</fullName>
    </alternativeName>
</protein>
<comment type="function">
    <text evidence="1 7 9">Highly reducing polyketide synthase (HR-PKS); part of the gene cluster that mediates the biosynthesis of squalestatin S1 (SQS1, also known as zaragozic acid A), a heavily oxidized fungal polyketide that offers potent cholesterol lowering activity by targeting squalene synthase (SS) (PubMed:28605916). SQS1 is composed of a 2,8-dioxobicyclic[3.2.1]octane-3,4,5-tricarboxyclic acid core that is connected to two lipophilic polyketide arms (PubMed:28605916). These initial steps feature the priming of an unusual benzoic acid starter unit onto the highly reducing polyketide synthase clz14, followed by oxaloacetate extension and product release to generate a tricarboxylic acid containing product (PubMed:28605916). The phenylalanine ammonia lyase (PAL) clz10 and the acyl-CoA ligase clz12 are involved in transforming phenylalanine into benzoyl-CoA (PubMed:28605916). The citrate synthase-like protein clz17 is involved in connecting the C-alpha-carbons of the hexaketide chain and oxaloacetate to afford the tricarboxylic acid unit (PubMed:28605916). The potential hydrolytic enzymes, clz11 and clz13, are in close proximity to pks2 and may participate in product release (PubMed:28605916). On the other side, the tetraketide arm is synthesized by a the squalestatin tetraketide synthase clz2 and enzymatically esterified to the core in the last biosynthetic step, by the acetyltransferase clz6 (By similarity). The biosynthesis of the tetraketide must involve 3 rounds of chain extension (By similarity). After the first and second rounds methyl-transfer occurs, and in all rounds of extension the ketoreductase and dehydratase are active (By similarity). The enoyl reductase and C-MeT of clz2 are not active in the final round of extension (By similarity). The acetyltransferase clz6 appears to have a broad substrate selectivity for its acyl CoA substrate, allowing the in vitro synthesis of novel squalestatins (By similarity). The biosynthesis of SQS1 requires several oxidative steps likely performed by oxidoreductases clz3, clz15 and clz16 (Probable). Finally, in support of the identification of the cluster as being responsible for SQS1 production, the cluster contains a gene encoding a putative squalene synthase (SS) clz20, suggesting a likely mechanism for self-resistance (Probable).</text>
</comment>
<comment type="pathway">
    <text evidence="9">Secondary metabolite biosynthesis.</text>
</comment>
<comment type="domain">
    <text evidence="9">Multidomain protein; including a ketosynthase (KS) that catalyzes repeated decarboxylative condensation to elongate the polyketide backbone; a malonyl-CoA:ACP transacylase (MAT) that selects and transfers the extender unit malonyl-CoA; a dehydratase (DH) domain that reduces hydroxyl groups to enoyl groups; a methyltransferase (CMeT) domain responsible for the incorporation of methyl groups; an enoylreductase (ER) domain that reduces enoyl groups to alkyl group; a ketoreductase (KR) domain that catalyzes beta-ketoreduction steps; and an acyl-carrier protein (ACP) that serves as the tether of the growing and completed polyketide via its phosphopantetheinyl arm.</text>
</comment>
<accession>A0A345BJP0</accession>
<name>CLZ2_COCLU</name>
<keyword id="KW-0012">Acyltransferase</keyword>
<keyword id="KW-0489">Methyltransferase</keyword>
<keyword id="KW-0511">Multifunctional enzyme</keyword>
<keyword id="KW-0521">NADP</keyword>
<keyword id="KW-0596">Phosphopantetheine</keyword>
<keyword id="KW-0597">Phosphoprotein</keyword>
<keyword id="KW-0808">Transferase</keyword>
<sequence>MPAMEETQFHDDATVPIAIVGMSCRFPGNATSPEKLWELCSEGRSAWSKIPKSRFRQEGFYNPNAERVGTSNVIGGHFLEEDPSLFDASFFNLSAEAAKTMDPQFRLQLESVYEAMESAGITLEHFAGSDTSVYAGACFRDYQDSLVRDPDLVPRFLLTGNGAAMSSNRISYFYDLHGASMTVDTGCSTTLTALHLACQGLRNRESKTSIVTGANVILNPDMFVTMSSLGLDDALRENDTIRCIIRGTALNQDGKTATLTSPSQTAQSDLIRACYKAAALDPSDTAFLAAHGTGTRTGDAVEISAAADVFGENRLPDRPLWIGSLKTNIGHSEAISGLASVIQAALALEKGLIPPNINFKEPNEKLDQVSAVVKVPSTLEKWPVGSGVRRASVNNFGYGGANAHVILESVTTGSTHRADVNGHHQKNGTTNGHKGANGTTNELNGTNGTANGHDITTGTKDYEQLESFVIALSAKEEASTSSMVTNIGDYVRKLHVEDETKHLKSIAHTLGNHRSMFKWTAAKSIKSLGDLLGTAEEGAQWFAMGRELINTYPVFRQSLDRADRYLKEFGCEWSIIEELSRDAETTNVNDMMLSPPLCTAVQISLVLLLESWGIVSTAVTGHSSGEIAAAYAAGALDFRSAMAVTYFRGEVGLACQDKIVGQGGMIAVGLGPEDAEIRIAHVQSGKIVIACINSQSSVTVSGDLTGIVELEELLKAEGVFARRVKVQAAYHSHHMQVIAKGYLTSLKDILKPGKNFGEIIYSSPTTGKRETNVKLMASPQHWVNNMLSPVRFAESFQNMCFSNQKSSQSGEESRDVDIVLEVGPHGMLQGPIQQMMSLPRFETARIPYLSCLLRGQSAVHTMQTLAAGLMGLGYRVDLAAVNFPQGTSGVKVLHDLPSYPWNHKNSHWWEPRLNKAHRQRVHPPHDLLGSLIPGRDLREPTWRHFIRVHDIPWIRDHVVQSQLVYPGAGFICMAIEAMSQFHDLKDSQSKKIAGYRLADIDILRAMIVPDTLEGLEAHISLRPCSTKLLLTNDWYEFCVSSVGDDDRFLDHCRGRIAIELDTSNMADAAMTSSRGYSHTTGLTRSVDPSNLYRFLRAQGIYHGPIFQNLETISSRKNHSKSSFVVANTASVMPNGFQNPHIIHPTTLDSIFQGAYTALPGAGLDRNTAMIPRSIQELYLSSALTSEVGQCLVSDTSLIRYDGQSFTVNVDVSSKADNKHKPILEIKGLRNQSVGQIALQKGDSSNNDLCFKLDWALDISSVKQERLKEKFGFPLDPAEAHIIMGLRQACLYFIRQTLQSLTSSDRDQLDWHQKRFYDWMMYQIQLAKEDRLGPNSSAWLQCSSSDEQKLLENVRAASVNGEMVVHVGGSIPAILRHEIAPLELMLQDKQLYRYYTDAIKWDRSYQQIDQLVKLHAHKCPTAKIIEIGGGTGGCTRAVLDALSNHGAARCEQYDFTDVSSGFFEAAQQKFAAFADVIRFQKLDIEKDIEMQGFESGSYDLVIASQVLHATGVMENTMSNVQKLLKPGGKLLLVETTRDEMDLQLVFGLLPGWWLSSEEERKMSPSLSVNSWEKVLKKTGFNGLDVELRDCDSDEFYSFSVMMATASSTIASNSIEAAIVHGEVPLPDQFLDDLKAAISSFAGLHPVVGPLKSIDVTGKFCIFIEDPETNILSSPDENSYASIKELVTRCKGLIWVSRGGAMHGTRPDSSLKTGLLRTLRLEYTEKRLISLDLDPARPQWDYDSITTISEVLRQALVQQADSPIKDSEFAEQDGQLFVPRISSDISRNDNLSSDSARAAQMEPFHQLGKLLQMGIKTPGLIDTLQFSKTDAPDNLANDYIEIEPKAFGLNFRDVMVAMGQLEESIMGFECAGIVRRVGPSSADHGIKVGDRVCALLGGQWTNTVRVHWHSVAPIPETMNWETAASIPIVHVTAYISLVKIAKMQAGETVLIHAASGGVGQAAIILAKHAGAEIFATVGTDEKRELLVKVYKIPEDHIFLSRNALFAKNIRRKTNGKGVDVVLNCLAGGLLQESFDCLADFGRFIEIGKRDIELNHCLNMGMFARSTTFTAVDLIAIGRDRSYMVAEALPKIMALLQEKAIRPVTPISIYKIGDIETAFRLMQAGKHMGKIVITAPEDAMVPVVTQPPKLQLHPDASYLIVGGLGGIGRSLCRNFIENGARSLVLLSRNANVSQQSGEFLDELRSTSCIVHVVDCDISNKTQVESTMLRLKQELLPIRGIVHAGMVLQDSVFERMTLEDYNTAIRPKVQGSWNLHSGLSDRDLDFFIMLSSLAGVSGSASQANYTAGGAYQDALAKHRRVQGLPAVSIDLGMVQSVGYVAETKGVAERLVRMGYSPISELEVLKIVEHAITNPPPEISSGQIITGISTKPGRHWTESSWLQDARFATLRERARDAKEQSNSQGGGTDSKISPGQELSMATSLVEAIDVVGRAITAKLATMFLIAAESIIASKSLSEYGVDSLVAVELRNWLAAQLSSDVSVFDVTQSQSLTALATTVATKSARINKSLLVA</sequence>
<dbReference type="EC" id="2.3.1.-"/>
<dbReference type="EMBL" id="MF806533">
    <property type="protein sequence ID" value="AXF50653.1"/>
    <property type="molecule type" value="Genomic_DNA"/>
</dbReference>
<dbReference type="SMR" id="A0A345BJP0"/>
<dbReference type="GO" id="GO:0004312">
    <property type="term" value="F:fatty acid synthase activity"/>
    <property type="evidence" value="ECO:0007669"/>
    <property type="project" value="TreeGrafter"/>
</dbReference>
<dbReference type="GO" id="GO:0008168">
    <property type="term" value="F:methyltransferase activity"/>
    <property type="evidence" value="ECO:0007669"/>
    <property type="project" value="UniProtKB-KW"/>
</dbReference>
<dbReference type="GO" id="GO:0016491">
    <property type="term" value="F:oxidoreductase activity"/>
    <property type="evidence" value="ECO:0007669"/>
    <property type="project" value="InterPro"/>
</dbReference>
<dbReference type="GO" id="GO:0031177">
    <property type="term" value="F:phosphopantetheine binding"/>
    <property type="evidence" value="ECO:0007669"/>
    <property type="project" value="InterPro"/>
</dbReference>
<dbReference type="GO" id="GO:0006633">
    <property type="term" value="P:fatty acid biosynthetic process"/>
    <property type="evidence" value="ECO:0007669"/>
    <property type="project" value="TreeGrafter"/>
</dbReference>
<dbReference type="GO" id="GO:0032259">
    <property type="term" value="P:methylation"/>
    <property type="evidence" value="ECO:0007669"/>
    <property type="project" value="UniProtKB-KW"/>
</dbReference>
<dbReference type="GO" id="GO:0030639">
    <property type="term" value="P:polyketide biosynthetic process"/>
    <property type="evidence" value="ECO:0007669"/>
    <property type="project" value="UniProtKB-ARBA"/>
</dbReference>
<dbReference type="CDD" id="cd05195">
    <property type="entry name" value="enoyl_red"/>
    <property type="match status" value="1"/>
</dbReference>
<dbReference type="CDD" id="cd00833">
    <property type="entry name" value="PKS"/>
    <property type="match status" value="1"/>
</dbReference>
<dbReference type="FunFam" id="3.40.50.720:FF:000209">
    <property type="entry name" value="Polyketide synthase Pks12"/>
    <property type="match status" value="1"/>
</dbReference>
<dbReference type="Gene3D" id="3.40.47.10">
    <property type="match status" value="2"/>
</dbReference>
<dbReference type="Gene3D" id="1.10.1200.10">
    <property type="entry name" value="ACP-like"/>
    <property type="match status" value="1"/>
</dbReference>
<dbReference type="Gene3D" id="3.40.366.10">
    <property type="entry name" value="Malonyl-Coenzyme A Acyl Carrier Protein, domain 2"/>
    <property type="match status" value="1"/>
</dbReference>
<dbReference type="Gene3D" id="3.90.180.10">
    <property type="entry name" value="Medium-chain alcohol dehydrogenases, catalytic domain"/>
    <property type="match status" value="1"/>
</dbReference>
<dbReference type="Gene3D" id="3.40.50.720">
    <property type="entry name" value="NAD(P)-binding Rossmann-like Domain"/>
    <property type="match status" value="1"/>
</dbReference>
<dbReference type="Gene3D" id="3.10.129.110">
    <property type="entry name" value="Polyketide synthase dehydratase"/>
    <property type="match status" value="1"/>
</dbReference>
<dbReference type="Gene3D" id="3.40.50.150">
    <property type="entry name" value="Vaccinia Virus protein VP39"/>
    <property type="match status" value="1"/>
</dbReference>
<dbReference type="InterPro" id="IPR001227">
    <property type="entry name" value="Ac_transferase_dom_sf"/>
</dbReference>
<dbReference type="InterPro" id="IPR036736">
    <property type="entry name" value="ACP-like_sf"/>
</dbReference>
<dbReference type="InterPro" id="IPR014043">
    <property type="entry name" value="Acyl_transferase_dom"/>
</dbReference>
<dbReference type="InterPro" id="IPR016035">
    <property type="entry name" value="Acyl_Trfase/lysoPLipase"/>
</dbReference>
<dbReference type="InterPro" id="IPR013154">
    <property type="entry name" value="ADH-like_N"/>
</dbReference>
<dbReference type="InterPro" id="IPR011032">
    <property type="entry name" value="GroES-like_sf"/>
</dbReference>
<dbReference type="InterPro" id="IPR014031">
    <property type="entry name" value="Ketoacyl_synth_C"/>
</dbReference>
<dbReference type="InterPro" id="IPR014030">
    <property type="entry name" value="Ketoacyl_synth_N"/>
</dbReference>
<dbReference type="InterPro" id="IPR016036">
    <property type="entry name" value="Malonyl_transacylase_ACP-bd"/>
</dbReference>
<dbReference type="InterPro" id="IPR013217">
    <property type="entry name" value="Methyltransf_12"/>
</dbReference>
<dbReference type="InterPro" id="IPR036291">
    <property type="entry name" value="NAD(P)-bd_dom_sf"/>
</dbReference>
<dbReference type="InterPro" id="IPR056501">
    <property type="entry name" value="NAD-bd_HRPKS_sdrA"/>
</dbReference>
<dbReference type="InterPro" id="IPR020841">
    <property type="entry name" value="PKS_Beta-ketoAc_synthase_dom"/>
</dbReference>
<dbReference type="InterPro" id="IPR042104">
    <property type="entry name" value="PKS_dehydratase_sf"/>
</dbReference>
<dbReference type="InterPro" id="IPR020807">
    <property type="entry name" value="PKS_DH"/>
</dbReference>
<dbReference type="InterPro" id="IPR049551">
    <property type="entry name" value="PKS_DH_C"/>
</dbReference>
<dbReference type="InterPro" id="IPR049552">
    <property type="entry name" value="PKS_DH_N"/>
</dbReference>
<dbReference type="InterPro" id="IPR020843">
    <property type="entry name" value="PKS_ER"/>
</dbReference>
<dbReference type="InterPro" id="IPR013968">
    <property type="entry name" value="PKS_KR"/>
</dbReference>
<dbReference type="InterPro" id="IPR049900">
    <property type="entry name" value="PKS_mFAS_DH"/>
</dbReference>
<dbReference type="InterPro" id="IPR050091">
    <property type="entry name" value="PKS_NRPS_Biosynth_Enz"/>
</dbReference>
<dbReference type="InterPro" id="IPR020806">
    <property type="entry name" value="PKS_PP-bd"/>
</dbReference>
<dbReference type="InterPro" id="IPR009081">
    <property type="entry name" value="PP-bd_ACP"/>
</dbReference>
<dbReference type="InterPro" id="IPR006162">
    <property type="entry name" value="Ppantetheine_attach_site"/>
</dbReference>
<dbReference type="InterPro" id="IPR029063">
    <property type="entry name" value="SAM-dependent_MTases_sf"/>
</dbReference>
<dbReference type="InterPro" id="IPR016039">
    <property type="entry name" value="Thiolase-like"/>
</dbReference>
<dbReference type="PANTHER" id="PTHR43775:SF29">
    <property type="entry name" value="ASPERFURANONE POLYKETIDE SYNTHASE AFOG-RELATED"/>
    <property type="match status" value="1"/>
</dbReference>
<dbReference type="PANTHER" id="PTHR43775">
    <property type="entry name" value="FATTY ACID SYNTHASE"/>
    <property type="match status" value="1"/>
</dbReference>
<dbReference type="Pfam" id="PF23297">
    <property type="entry name" value="ACP_SdgA_C"/>
    <property type="match status" value="1"/>
</dbReference>
<dbReference type="Pfam" id="PF00698">
    <property type="entry name" value="Acyl_transf_1"/>
    <property type="match status" value="1"/>
</dbReference>
<dbReference type="Pfam" id="PF08240">
    <property type="entry name" value="ADH_N"/>
    <property type="match status" value="1"/>
</dbReference>
<dbReference type="Pfam" id="PF13602">
    <property type="entry name" value="ADH_zinc_N_2"/>
    <property type="match status" value="1"/>
</dbReference>
<dbReference type="Pfam" id="PF00109">
    <property type="entry name" value="ketoacyl-synt"/>
    <property type="match status" value="1"/>
</dbReference>
<dbReference type="Pfam" id="PF02801">
    <property type="entry name" value="Ketoacyl-synt_C"/>
    <property type="match status" value="1"/>
</dbReference>
<dbReference type="Pfam" id="PF08659">
    <property type="entry name" value="KR"/>
    <property type="match status" value="1"/>
</dbReference>
<dbReference type="Pfam" id="PF08242">
    <property type="entry name" value="Methyltransf_12"/>
    <property type="match status" value="1"/>
</dbReference>
<dbReference type="Pfam" id="PF23114">
    <property type="entry name" value="NAD-bd_HRPKS_sdrA"/>
    <property type="match status" value="1"/>
</dbReference>
<dbReference type="Pfam" id="PF21089">
    <property type="entry name" value="PKS_DH_N"/>
    <property type="match status" value="1"/>
</dbReference>
<dbReference type="Pfam" id="PF14765">
    <property type="entry name" value="PS-DH"/>
    <property type="match status" value="1"/>
</dbReference>
<dbReference type="SMART" id="SM00827">
    <property type="entry name" value="PKS_AT"/>
    <property type="match status" value="1"/>
</dbReference>
<dbReference type="SMART" id="SM00826">
    <property type="entry name" value="PKS_DH"/>
    <property type="match status" value="1"/>
</dbReference>
<dbReference type="SMART" id="SM00829">
    <property type="entry name" value="PKS_ER"/>
    <property type="match status" value="1"/>
</dbReference>
<dbReference type="SMART" id="SM00822">
    <property type="entry name" value="PKS_KR"/>
    <property type="match status" value="1"/>
</dbReference>
<dbReference type="SMART" id="SM00825">
    <property type="entry name" value="PKS_KS"/>
    <property type="match status" value="1"/>
</dbReference>
<dbReference type="SMART" id="SM00823">
    <property type="entry name" value="PKS_PP"/>
    <property type="match status" value="1"/>
</dbReference>
<dbReference type="SUPFAM" id="SSF47336">
    <property type="entry name" value="ACP-like"/>
    <property type="match status" value="1"/>
</dbReference>
<dbReference type="SUPFAM" id="SSF52151">
    <property type="entry name" value="FabD/lysophospholipase-like"/>
    <property type="match status" value="1"/>
</dbReference>
<dbReference type="SUPFAM" id="SSF50129">
    <property type="entry name" value="GroES-like"/>
    <property type="match status" value="1"/>
</dbReference>
<dbReference type="SUPFAM" id="SSF51735">
    <property type="entry name" value="NAD(P)-binding Rossmann-fold domains"/>
    <property type="match status" value="2"/>
</dbReference>
<dbReference type="SUPFAM" id="SSF55048">
    <property type="entry name" value="Probable ACP-binding domain of malonyl-CoA ACP transacylase"/>
    <property type="match status" value="1"/>
</dbReference>
<dbReference type="SUPFAM" id="SSF53335">
    <property type="entry name" value="S-adenosyl-L-methionine-dependent methyltransferases"/>
    <property type="match status" value="1"/>
</dbReference>
<dbReference type="SUPFAM" id="SSF53901">
    <property type="entry name" value="Thiolase-like"/>
    <property type="match status" value="1"/>
</dbReference>
<dbReference type="PROSITE" id="PS50075">
    <property type="entry name" value="CARRIER"/>
    <property type="match status" value="1"/>
</dbReference>
<dbReference type="PROSITE" id="PS52004">
    <property type="entry name" value="KS3_2"/>
    <property type="match status" value="1"/>
</dbReference>
<dbReference type="PROSITE" id="PS00012">
    <property type="entry name" value="PHOSPHOPANTETHEINE"/>
    <property type="match status" value="1"/>
</dbReference>
<dbReference type="PROSITE" id="PS52019">
    <property type="entry name" value="PKS_MFAS_DH"/>
    <property type="match status" value="1"/>
</dbReference>
<proteinExistence type="inferred from homology"/>
<gene>
    <name evidence="8" type="primary">clz2</name>
</gene>
<evidence type="ECO:0000250" key="1">
    <source>
        <dbReference type="UniProtKB" id="A0A3G1DJH7"/>
    </source>
</evidence>
<evidence type="ECO:0000255" key="2"/>
<evidence type="ECO:0000255" key="3">
    <source>
        <dbReference type="PROSITE-ProRule" id="PRU00258"/>
    </source>
</evidence>
<evidence type="ECO:0000255" key="4">
    <source>
        <dbReference type="PROSITE-ProRule" id="PRU01348"/>
    </source>
</evidence>
<evidence type="ECO:0000255" key="5">
    <source>
        <dbReference type="PROSITE-ProRule" id="PRU01363"/>
    </source>
</evidence>
<evidence type="ECO:0000256" key="6">
    <source>
        <dbReference type="SAM" id="MobiDB-lite"/>
    </source>
</evidence>
<evidence type="ECO:0000269" key="7">
    <source>
    </source>
</evidence>
<evidence type="ECO:0000303" key="8">
    <source>
    </source>
</evidence>
<evidence type="ECO:0000305" key="9">
    <source>
    </source>
</evidence>